<gene>
    <name evidence="8" type="primary">dgcM</name>
    <name type="synonym">ydaM</name>
    <name type="ordered locus">b1341</name>
    <name type="ordered locus">JW5206</name>
</gene>
<protein>
    <recommendedName>
        <fullName evidence="9">Diguanylate cyclase DgcM</fullName>
        <shortName evidence="9">DGC</shortName>
        <ecNumber evidence="5 7">2.7.7.65</ecNumber>
    </recommendedName>
</protein>
<comment type="function">
    <text evidence="5 7">Part of a signaling cascade that regulates curli biosynthesis. The cascade is composed of two cyclic-di-GMP (c-di-GMP) control modules, in which c-di-GMP controlled by the DgcE/PdeH pair (module I) regulates the activity of the DgcM/PdeR pair (module II), which in turn regulates activity of the transcription factor MlrA and expression of the master biofilm regulator csgD (PubMed:23708798). DgcM stimulates activity of MlrA by direct interaction, leading to the transcription of csgD. It also catalyzes the synthesis of c-di-GMP via the condensation of 2 GTP molecules, which contributes to the c-di-GMP pool generated by module I in a positive feedback loop. Production of c-di-GMP contributes to but is not essential for MlrA activation (PubMed:17010156, PubMed:23708798).</text>
</comment>
<comment type="catalytic activity">
    <reaction evidence="5 7">
        <text>2 GTP = 3',3'-c-di-GMP + 2 diphosphate</text>
        <dbReference type="Rhea" id="RHEA:24898"/>
        <dbReference type="ChEBI" id="CHEBI:33019"/>
        <dbReference type="ChEBI" id="CHEBI:37565"/>
        <dbReference type="ChEBI" id="CHEBI:58805"/>
        <dbReference type="EC" id="2.7.7.65"/>
    </reaction>
</comment>
<comment type="cofactor">
    <cofactor evidence="1">
        <name>Mg(2+)</name>
        <dbReference type="ChEBI" id="CHEBI:18420"/>
    </cofactor>
    <text evidence="1">Binds 1 Mg(2+) ion per monomer.</text>
</comment>
<comment type="activity regulation">
    <text evidence="5 7">Activity is inhibited by the phosphodiesterase PdeR. Inhibition is relieved by high cellular c-di-GMP levels.</text>
</comment>
<comment type="pathway">
    <text evidence="9">Purine metabolism; 3',5'-cyclic di-GMP biosynthesis.</text>
</comment>
<comment type="subunit">
    <text evidence="7">Forms homodimers and homotetramers (PubMed:23708798). Interacts with PdeR and MlrA (PubMed:23708798).</text>
</comment>
<comment type="interaction">
    <interactant intactId="EBI-544662">
        <id>P77302</id>
    </interactant>
    <interactant intactId="EBI-544662">
        <id>P77302</id>
        <label>dgcM</label>
    </interactant>
    <organismsDiffer>false</organismsDiffer>
    <experiments>3</experiments>
</comment>
<comment type="interaction">
    <interactant intactId="EBI-544662">
        <id>P77302</id>
    </interactant>
    <interactant intactId="EBI-1127668">
        <id>P33358</id>
        <label>mlrA</label>
    </interactant>
    <organismsDiffer>false</organismsDiffer>
    <experiments>2</experiments>
</comment>
<comment type="interaction">
    <interactant intactId="EBI-544662">
        <id>P77302</id>
    </interactant>
    <interactant intactId="EBI-548149">
        <id>P77334</id>
        <label>pdeR</label>
    </interactant>
    <organismsDiffer>false</organismsDiffer>
    <experiments>5</experiments>
</comment>
<comment type="induction">
    <text evidence="5 6">Expressed during transition into stationary phase, expression is higher at 28 than 37 degrees Celsius, more highly expressed on plates than in liquid medium. In rich medium DgcM and DosC are the major RpoS-dependent GGDEF-domain containing proteins in the cell. Expression is RpoS and H-NS dependent.</text>
</comment>
<comment type="disruption phenotype">
    <text evidence="5 6">Loss of curli fimbriae, decreased biofilm formation, decreased expression of DgcC, a probable diguanylate cyclase and of the curli regulator CsgD.</text>
</comment>
<dbReference type="EC" id="2.7.7.65" evidence="5 7"/>
<dbReference type="EMBL" id="U00096">
    <property type="protein sequence ID" value="AAC74423.2"/>
    <property type="molecule type" value="Genomic_DNA"/>
</dbReference>
<dbReference type="EMBL" id="AP009048">
    <property type="protein sequence ID" value="BAA14945.2"/>
    <property type="molecule type" value="Genomic_DNA"/>
</dbReference>
<dbReference type="PIR" id="H64883">
    <property type="entry name" value="H64883"/>
</dbReference>
<dbReference type="RefSeq" id="NP_415857.2">
    <property type="nucleotide sequence ID" value="NC_000913.3"/>
</dbReference>
<dbReference type="RefSeq" id="WP_000628058.1">
    <property type="nucleotide sequence ID" value="NZ_SSZK01000012.1"/>
</dbReference>
<dbReference type="SMR" id="P77302"/>
<dbReference type="BioGRID" id="4259650">
    <property type="interactions" value="21"/>
</dbReference>
<dbReference type="DIP" id="DIP-28053N"/>
<dbReference type="FunCoup" id="P77302">
    <property type="interactions" value="61"/>
</dbReference>
<dbReference type="IntAct" id="P77302">
    <property type="interactions" value="7"/>
</dbReference>
<dbReference type="MINT" id="P77302"/>
<dbReference type="STRING" id="511145.b1341"/>
<dbReference type="jPOST" id="P77302"/>
<dbReference type="PaxDb" id="511145-b1341"/>
<dbReference type="EnsemblBacteria" id="AAC74423">
    <property type="protein sequence ID" value="AAC74423"/>
    <property type="gene ID" value="b1341"/>
</dbReference>
<dbReference type="GeneID" id="945909"/>
<dbReference type="KEGG" id="ecj:JW5206"/>
<dbReference type="KEGG" id="eco:b1341"/>
<dbReference type="KEGG" id="ecoc:C3026_07855"/>
<dbReference type="PATRIC" id="fig|1411691.4.peg.936"/>
<dbReference type="EchoBASE" id="EB3138"/>
<dbReference type="eggNOG" id="COG3706">
    <property type="taxonomic scope" value="Bacteria"/>
</dbReference>
<dbReference type="HOGENOM" id="CLU_000445_11_4_6"/>
<dbReference type="InParanoid" id="P77302"/>
<dbReference type="OMA" id="HTWEINT"/>
<dbReference type="OrthoDB" id="9812260at2"/>
<dbReference type="PhylomeDB" id="P77302"/>
<dbReference type="BioCyc" id="EcoCyc:G6673-MONOMER"/>
<dbReference type="BioCyc" id="MetaCyc:G6673-MONOMER"/>
<dbReference type="UniPathway" id="UPA00599"/>
<dbReference type="PRO" id="PR:P77302"/>
<dbReference type="Proteomes" id="UP000000625">
    <property type="component" value="Chromosome"/>
</dbReference>
<dbReference type="GO" id="GO:0005886">
    <property type="term" value="C:plasma membrane"/>
    <property type="evidence" value="ECO:0000318"/>
    <property type="project" value="GO_Central"/>
</dbReference>
<dbReference type="GO" id="GO:0052621">
    <property type="term" value="F:diguanylate cyclase activity"/>
    <property type="evidence" value="ECO:0000314"/>
    <property type="project" value="EcoCyc"/>
</dbReference>
<dbReference type="GO" id="GO:0005525">
    <property type="term" value="F:GTP binding"/>
    <property type="evidence" value="ECO:0007669"/>
    <property type="project" value="UniProtKB-KW"/>
</dbReference>
<dbReference type="GO" id="GO:0042802">
    <property type="term" value="F:identical protein binding"/>
    <property type="evidence" value="ECO:0000314"/>
    <property type="project" value="EcoCyc"/>
</dbReference>
<dbReference type="GO" id="GO:0046872">
    <property type="term" value="F:metal ion binding"/>
    <property type="evidence" value="ECO:0007669"/>
    <property type="project" value="UniProtKB-KW"/>
</dbReference>
<dbReference type="GO" id="GO:0043709">
    <property type="term" value="P:cell adhesion involved in single-species biofilm formation"/>
    <property type="evidence" value="ECO:0000318"/>
    <property type="project" value="GO_Central"/>
</dbReference>
<dbReference type="GO" id="GO:1902201">
    <property type="term" value="P:negative regulation of bacterial-type flagellum-dependent cell motility"/>
    <property type="evidence" value="ECO:0000318"/>
    <property type="project" value="GO_Central"/>
</dbReference>
<dbReference type="GO" id="GO:1900233">
    <property type="term" value="P:positive regulation of single-species biofilm formation on inanimate substrate"/>
    <property type="evidence" value="ECO:0000315"/>
    <property type="project" value="EcoCyc"/>
</dbReference>
<dbReference type="CDD" id="cd01949">
    <property type="entry name" value="GGDEF"/>
    <property type="match status" value="1"/>
</dbReference>
<dbReference type="CDD" id="cd00130">
    <property type="entry name" value="PAS"/>
    <property type="match status" value="1"/>
</dbReference>
<dbReference type="FunFam" id="3.30.70.270:FF:000001">
    <property type="entry name" value="Diguanylate cyclase domain protein"/>
    <property type="match status" value="1"/>
</dbReference>
<dbReference type="Gene3D" id="3.30.70.270">
    <property type="match status" value="1"/>
</dbReference>
<dbReference type="Gene3D" id="3.30.450.20">
    <property type="entry name" value="PAS domain"/>
    <property type="match status" value="1"/>
</dbReference>
<dbReference type="InterPro" id="IPR050469">
    <property type="entry name" value="Diguanylate_Cyclase"/>
</dbReference>
<dbReference type="InterPro" id="IPR000160">
    <property type="entry name" value="GGDEF_dom"/>
</dbReference>
<dbReference type="InterPro" id="IPR029787">
    <property type="entry name" value="Nucleotide_cyclase"/>
</dbReference>
<dbReference type="InterPro" id="IPR000014">
    <property type="entry name" value="PAS"/>
</dbReference>
<dbReference type="InterPro" id="IPR000700">
    <property type="entry name" value="PAS-assoc_C"/>
</dbReference>
<dbReference type="InterPro" id="IPR035965">
    <property type="entry name" value="PAS-like_dom_sf"/>
</dbReference>
<dbReference type="InterPro" id="IPR013656">
    <property type="entry name" value="PAS_4"/>
</dbReference>
<dbReference type="InterPro" id="IPR043128">
    <property type="entry name" value="Rev_trsase/Diguanyl_cyclase"/>
</dbReference>
<dbReference type="NCBIfam" id="TIGR00254">
    <property type="entry name" value="GGDEF"/>
    <property type="match status" value="1"/>
</dbReference>
<dbReference type="NCBIfam" id="TIGR00229">
    <property type="entry name" value="sensory_box"/>
    <property type="match status" value="1"/>
</dbReference>
<dbReference type="PANTHER" id="PTHR45138:SF9">
    <property type="entry name" value="DIGUANYLATE CYCLASE DGCM-RELATED"/>
    <property type="match status" value="1"/>
</dbReference>
<dbReference type="PANTHER" id="PTHR45138">
    <property type="entry name" value="REGULATORY COMPONENTS OF SENSORY TRANSDUCTION SYSTEM"/>
    <property type="match status" value="1"/>
</dbReference>
<dbReference type="Pfam" id="PF00990">
    <property type="entry name" value="GGDEF"/>
    <property type="match status" value="1"/>
</dbReference>
<dbReference type="Pfam" id="PF08448">
    <property type="entry name" value="PAS_4"/>
    <property type="match status" value="1"/>
</dbReference>
<dbReference type="SMART" id="SM00267">
    <property type="entry name" value="GGDEF"/>
    <property type="match status" value="1"/>
</dbReference>
<dbReference type="SMART" id="SM00091">
    <property type="entry name" value="PAS"/>
    <property type="match status" value="2"/>
</dbReference>
<dbReference type="SUPFAM" id="SSF55073">
    <property type="entry name" value="Nucleotide cyclase"/>
    <property type="match status" value="1"/>
</dbReference>
<dbReference type="SUPFAM" id="SSF55785">
    <property type="entry name" value="PYP-like sensor domain (PAS domain)"/>
    <property type="match status" value="1"/>
</dbReference>
<dbReference type="PROSITE" id="PS50887">
    <property type="entry name" value="GGDEF"/>
    <property type="match status" value="1"/>
</dbReference>
<dbReference type="PROSITE" id="PS50113">
    <property type="entry name" value="PAC"/>
    <property type="match status" value="1"/>
</dbReference>
<proteinExistence type="evidence at protein level"/>
<name>DGCM_ECOLI</name>
<keyword id="KW-0342">GTP-binding</keyword>
<keyword id="KW-0460">Magnesium</keyword>
<keyword id="KW-0479">Metal-binding</keyword>
<keyword id="KW-0547">Nucleotide-binding</keyword>
<keyword id="KW-1185">Reference proteome</keyword>
<keyword id="KW-0677">Repeat</keyword>
<keyword id="KW-0808">Transferase</keyword>
<reference key="1">
    <citation type="journal article" date="1996" name="DNA Res.">
        <title>A 570-kb DNA sequence of the Escherichia coli K-12 genome corresponding to the 28.0-40.1 min region on the linkage map.</title>
        <authorList>
            <person name="Aiba H."/>
            <person name="Baba T."/>
            <person name="Fujita K."/>
            <person name="Hayashi K."/>
            <person name="Inada T."/>
            <person name="Isono K."/>
            <person name="Itoh T."/>
            <person name="Kasai H."/>
            <person name="Kashimoto K."/>
            <person name="Kimura S."/>
            <person name="Kitakawa M."/>
            <person name="Kitagawa M."/>
            <person name="Makino K."/>
            <person name="Miki T."/>
            <person name="Mizobuchi K."/>
            <person name="Mori H."/>
            <person name="Mori T."/>
            <person name="Motomura K."/>
            <person name="Nakade S."/>
            <person name="Nakamura Y."/>
            <person name="Nashimoto H."/>
            <person name="Nishio Y."/>
            <person name="Oshima T."/>
            <person name="Saito N."/>
            <person name="Sampei G."/>
            <person name="Seki Y."/>
            <person name="Sivasundaram S."/>
            <person name="Tagami H."/>
            <person name="Takeda J."/>
            <person name="Takemoto K."/>
            <person name="Takeuchi Y."/>
            <person name="Wada C."/>
            <person name="Yamamoto Y."/>
            <person name="Horiuchi T."/>
        </authorList>
    </citation>
    <scope>NUCLEOTIDE SEQUENCE [LARGE SCALE GENOMIC DNA]</scope>
    <source>
        <strain>K12 / W3110 / ATCC 27325 / DSM 5911</strain>
    </source>
</reference>
<reference key="2">
    <citation type="journal article" date="1997" name="Science">
        <title>The complete genome sequence of Escherichia coli K-12.</title>
        <authorList>
            <person name="Blattner F.R."/>
            <person name="Plunkett G. III"/>
            <person name="Bloch C.A."/>
            <person name="Perna N.T."/>
            <person name="Burland V."/>
            <person name="Riley M."/>
            <person name="Collado-Vides J."/>
            <person name="Glasner J.D."/>
            <person name="Rode C.K."/>
            <person name="Mayhew G.F."/>
            <person name="Gregor J."/>
            <person name="Davis N.W."/>
            <person name="Kirkpatrick H.A."/>
            <person name="Goeden M.A."/>
            <person name="Rose D.J."/>
            <person name="Mau B."/>
            <person name="Shao Y."/>
        </authorList>
    </citation>
    <scope>NUCLEOTIDE SEQUENCE [LARGE SCALE GENOMIC DNA]</scope>
    <source>
        <strain>K12 / MG1655 / ATCC 47076</strain>
    </source>
</reference>
<reference key="3">
    <citation type="journal article" date="2006" name="Mol. Syst. Biol.">
        <title>Highly accurate genome sequences of Escherichia coli K-12 strains MG1655 and W3110.</title>
        <authorList>
            <person name="Hayashi K."/>
            <person name="Morooka N."/>
            <person name="Yamamoto Y."/>
            <person name="Fujita K."/>
            <person name="Isono K."/>
            <person name="Choi S."/>
            <person name="Ohtsubo E."/>
            <person name="Baba T."/>
            <person name="Wanner B.L."/>
            <person name="Mori H."/>
            <person name="Horiuchi T."/>
        </authorList>
    </citation>
    <scope>NUCLEOTIDE SEQUENCE [LARGE SCALE GENOMIC DNA]</scope>
    <source>
        <strain>K12 / W3110 / ATCC 27325 / DSM 5911</strain>
    </source>
</reference>
<reference key="4">
    <citation type="journal article" date="2006" name="Mol. Microbiol.">
        <title>Cyclic-di-GMP-mediated signalling within the sigma network of Escherichia coli.</title>
        <authorList>
            <person name="Weber H."/>
            <person name="Pesavento C."/>
            <person name="Possling A."/>
            <person name="Tischendorf G."/>
            <person name="Hengge R."/>
        </authorList>
    </citation>
    <scope>FUNCTION IN FIMBRIAE EXPRESSION</scope>
    <scope>CATALYTIC ACTIVITY</scope>
    <scope>ACTIVITY REGULATION</scope>
    <scope>MUTAGENESIS OF 334-GLU-GLU-335</scope>
    <scope>INDUCTION</scope>
    <scope>RPOS- AND H-NS-DEPENDENCE</scope>
    <scope>DISRUPTION PHENOTYPE</scope>
    <source>
        <strain>K12 / MC4100</strain>
    </source>
</reference>
<reference key="5">
    <citation type="journal article" date="2009" name="Microbiology">
        <title>Gene expression patterns and differential input into curli fimbriae regulation of all GGDEF/EAL domain proteins in Escherichia coli.</title>
        <authorList>
            <person name="Sommerfeldt N."/>
            <person name="Possling A."/>
            <person name="Becker G."/>
            <person name="Pesavento C."/>
            <person name="Tschowri N."/>
            <person name="Hengge R."/>
        </authorList>
    </citation>
    <scope>INDUCTION</scope>
    <scope>RPOS-DEPENDENCE</scope>
    <scope>DISRUPTION PHENOTYPE</scope>
    <source>
        <strain>K12 / W3110 / ATCC 27325 / DSM 5911</strain>
    </source>
</reference>
<reference key="6">
    <citation type="journal article" date="2013" name="EMBO J.">
        <title>The EAL domain protein YciR acts as a trigger enzyme in a c-di-GMP signalling cascade in E. coli biofilm control.</title>
        <authorList>
            <person name="Lindenberg S."/>
            <person name="Klauck G."/>
            <person name="Pesavento C."/>
            <person name="Klauck E."/>
            <person name="Hengge R."/>
        </authorList>
    </citation>
    <scope>FUNCTION</scope>
    <scope>CATALYTIC ACTIVITY</scope>
    <scope>ACTIVITY REGULATION</scope>
    <scope>INTERACTION WITH PDER AND MLRA</scope>
</reference>
<reference key="7">
    <citation type="journal article" date="2015" name="J. Bacteriol.">
        <title>Systematic nomenclature for GGDEF and EAL domain-containing cyclic di-GMP turnover proteins of Escherichia coli.</title>
        <authorList>
            <person name="Hengge R."/>
            <person name="Galperin M.Y."/>
            <person name="Ghigo J.M."/>
            <person name="Gomelsky M."/>
            <person name="Green J."/>
            <person name="Hughes K.T."/>
            <person name="Jenal U."/>
            <person name="Landini P."/>
        </authorList>
    </citation>
    <scope>NOMENCLATURE</scope>
</reference>
<feature type="chain" id="PRO_0000201313" description="Diguanylate cyclase DgcM">
    <location>
        <begin position="1"/>
        <end position="410"/>
    </location>
</feature>
<feature type="domain" description="PAS 1" evidence="2">
    <location>
        <begin position="3"/>
        <end position="70"/>
    </location>
</feature>
<feature type="domain" description="PAS 2" evidence="2">
    <location>
        <begin position="129"/>
        <end position="198"/>
    </location>
</feature>
<feature type="domain" description="PAC" evidence="4">
    <location>
        <begin position="199"/>
        <end position="251"/>
    </location>
</feature>
<feature type="domain" description="GGDEF" evidence="3">
    <location>
        <begin position="283"/>
        <end position="410"/>
    </location>
</feature>
<feature type="active site" description="Proton acceptor" evidence="2">
    <location>
        <position position="334"/>
    </location>
</feature>
<feature type="binding site" evidence="1">
    <location>
        <position position="291"/>
    </location>
    <ligand>
        <name>Mg(2+)</name>
        <dbReference type="ChEBI" id="CHEBI:18420"/>
    </ligand>
</feature>
<feature type="binding site" evidence="1">
    <location>
        <position position="299"/>
    </location>
    <ligand>
        <name>substrate</name>
    </ligand>
</feature>
<feature type="binding site" evidence="1">
    <location>
        <position position="304"/>
    </location>
    <ligand>
        <name>substrate</name>
    </ligand>
</feature>
<feature type="binding site" evidence="1">
    <location>
        <position position="308"/>
    </location>
    <ligand>
        <name>substrate</name>
    </ligand>
</feature>
<feature type="binding site" evidence="1">
    <location>
        <position position="334"/>
    </location>
    <ligand>
        <name>Mg(2+)</name>
        <dbReference type="ChEBI" id="CHEBI:18420"/>
    </ligand>
</feature>
<feature type="site" description="Transition state stabilizer" evidence="2">
    <location>
        <position position="296"/>
    </location>
</feature>
<feature type="mutagenesis site" description="No longer complements a dgcM disruption, loss of csgB induction." evidence="5">
    <original>EE</original>
    <variation>AA</variation>
    <location>
        <begin position="334"/>
        <end position="335"/>
    </location>
</feature>
<organism>
    <name type="scientific">Escherichia coli (strain K12)</name>
    <dbReference type="NCBI Taxonomy" id="83333"/>
    <lineage>
        <taxon>Bacteria</taxon>
        <taxon>Pseudomonadati</taxon>
        <taxon>Pseudomonadota</taxon>
        <taxon>Gammaproteobacteria</taxon>
        <taxon>Enterobacterales</taxon>
        <taxon>Enterobacteriaceae</taxon>
        <taxon>Escherichia</taxon>
    </lineage>
</organism>
<evidence type="ECO:0000250" key="1">
    <source>
        <dbReference type="UniProtKB" id="P31129"/>
    </source>
</evidence>
<evidence type="ECO:0000255" key="2"/>
<evidence type="ECO:0000255" key="3">
    <source>
        <dbReference type="PROSITE-ProRule" id="PRU00095"/>
    </source>
</evidence>
<evidence type="ECO:0000255" key="4">
    <source>
        <dbReference type="PROSITE-ProRule" id="PRU00141"/>
    </source>
</evidence>
<evidence type="ECO:0000269" key="5">
    <source>
    </source>
</evidence>
<evidence type="ECO:0000269" key="6">
    <source>
    </source>
</evidence>
<evidence type="ECO:0000269" key="7">
    <source>
    </source>
</evidence>
<evidence type="ECO:0000303" key="8">
    <source>
    </source>
</evidence>
<evidence type="ECO:0000305" key="9"/>
<accession>P77302</accession>
<accession>P76846</accession>
<sequence length="410" mass="46452">MITHNFNTLDLLTSPVWIVSPFEEQLIYANSAAKLLMQDLTFSQLRTGPYSVSSQKELPKYLSDLQNQHDIIEILTVQRKEEETALSCRLVLRKLTETEPVIIFEGIEAPATLGLKASRSANYQRKKQGFYARFFLTNSAPMLLIDPSRDGQIVDANLAALNFYGYNHETMCQKHTWEINMLGRRVMPIMHEISHLPGGHKPLNFVHKLADGSTRHVQTYAGPIEIYGDKLMLCIVHDITEQKRLEEQLEHAAHHDAMTGLLNRRQFYHITEPGQMQHLAIAQDYSLLLIDTDRFKHINDLYGHSKGDEVLCALARTLESCARKGDLVFRWGGEEFVLLLPRTPLDTALSLAETIRVSVAKVSISGLPRFTVSIGVAHHEGNESIDELFKRVDDALYRAKNDGRNRVLAA</sequence>